<reference key="1">
    <citation type="journal article" date="2010" name="J. Bacteriol.">
        <title>Genome sequence of the deep-rooted Yersinia pestis strain Angola reveals new insights into the evolution and pangenome of the plague bacterium.</title>
        <authorList>
            <person name="Eppinger M."/>
            <person name="Worsham P.L."/>
            <person name="Nikolich M.P."/>
            <person name="Riley D.R."/>
            <person name="Sebastian Y."/>
            <person name="Mou S."/>
            <person name="Achtman M."/>
            <person name="Lindler L.E."/>
            <person name="Ravel J."/>
        </authorList>
    </citation>
    <scope>NUCLEOTIDE SEQUENCE [LARGE SCALE GENOMIC DNA]</scope>
    <source>
        <strain>Angola</strain>
    </source>
</reference>
<dbReference type="EC" id="1.8.4.11" evidence="1"/>
<dbReference type="EMBL" id="CP000901">
    <property type="protein sequence ID" value="ABX86645.1"/>
    <property type="molecule type" value="Genomic_DNA"/>
</dbReference>
<dbReference type="RefSeq" id="WP_002210165.1">
    <property type="nucleotide sequence ID" value="NZ_CP009935.1"/>
</dbReference>
<dbReference type="SMR" id="A9R574"/>
<dbReference type="GeneID" id="57975189"/>
<dbReference type="KEGG" id="ypg:YpAngola_A3961"/>
<dbReference type="PATRIC" id="fig|349746.12.peg.685"/>
<dbReference type="GO" id="GO:0005737">
    <property type="term" value="C:cytoplasm"/>
    <property type="evidence" value="ECO:0007669"/>
    <property type="project" value="TreeGrafter"/>
</dbReference>
<dbReference type="GO" id="GO:0036456">
    <property type="term" value="F:L-methionine-(S)-S-oxide reductase activity"/>
    <property type="evidence" value="ECO:0007669"/>
    <property type="project" value="TreeGrafter"/>
</dbReference>
<dbReference type="GO" id="GO:0008113">
    <property type="term" value="F:peptide-methionine (S)-S-oxide reductase activity"/>
    <property type="evidence" value="ECO:0007669"/>
    <property type="project" value="UniProtKB-UniRule"/>
</dbReference>
<dbReference type="GO" id="GO:0034599">
    <property type="term" value="P:cellular response to oxidative stress"/>
    <property type="evidence" value="ECO:0007669"/>
    <property type="project" value="TreeGrafter"/>
</dbReference>
<dbReference type="GO" id="GO:0036211">
    <property type="term" value="P:protein modification process"/>
    <property type="evidence" value="ECO:0007669"/>
    <property type="project" value="UniProtKB-UniRule"/>
</dbReference>
<dbReference type="FunFam" id="3.30.1060.10:FF:000001">
    <property type="entry name" value="Peptide methionine sulfoxide reductase MsrA"/>
    <property type="match status" value="1"/>
</dbReference>
<dbReference type="Gene3D" id="3.30.1060.10">
    <property type="entry name" value="Peptide methionine sulphoxide reductase MsrA"/>
    <property type="match status" value="1"/>
</dbReference>
<dbReference type="HAMAP" id="MF_01401">
    <property type="entry name" value="MsrA"/>
    <property type="match status" value="1"/>
</dbReference>
<dbReference type="InterPro" id="IPR002569">
    <property type="entry name" value="Met_Sox_Rdtase_MsrA_dom"/>
</dbReference>
<dbReference type="InterPro" id="IPR036509">
    <property type="entry name" value="Met_Sox_Rdtase_MsrA_sf"/>
</dbReference>
<dbReference type="InterPro" id="IPR050162">
    <property type="entry name" value="MsrA_MetSO_reductase"/>
</dbReference>
<dbReference type="NCBIfam" id="TIGR00401">
    <property type="entry name" value="msrA"/>
    <property type="match status" value="1"/>
</dbReference>
<dbReference type="PANTHER" id="PTHR42799">
    <property type="entry name" value="MITOCHONDRIAL PEPTIDE METHIONINE SULFOXIDE REDUCTASE"/>
    <property type="match status" value="1"/>
</dbReference>
<dbReference type="PANTHER" id="PTHR42799:SF2">
    <property type="entry name" value="MITOCHONDRIAL PEPTIDE METHIONINE SULFOXIDE REDUCTASE"/>
    <property type="match status" value="1"/>
</dbReference>
<dbReference type="Pfam" id="PF01625">
    <property type="entry name" value="PMSR"/>
    <property type="match status" value="1"/>
</dbReference>
<dbReference type="SUPFAM" id="SSF55068">
    <property type="entry name" value="Peptide methionine sulfoxide reductase"/>
    <property type="match status" value="1"/>
</dbReference>
<keyword id="KW-0560">Oxidoreductase</keyword>
<comment type="function">
    <text evidence="1">Has an important function as a repair enzyme for proteins that have been inactivated by oxidation. Catalyzes the reversible oxidation-reduction of methionine sulfoxide in proteins to methionine.</text>
</comment>
<comment type="catalytic activity">
    <reaction evidence="1">
        <text>L-methionyl-[protein] + [thioredoxin]-disulfide + H2O = L-methionyl-(S)-S-oxide-[protein] + [thioredoxin]-dithiol</text>
        <dbReference type="Rhea" id="RHEA:14217"/>
        <dbReference type="Rhea" id="RHEA-COMP:10698"/>
        <dbReference type="Rhea" id="RHEA-COMP:10700"/>
        <dbReference type="Rhea" id="RHEA-COMP:12313"/>
        <dbReference type="Rhea" id="RHEA-COMP:12315"/>
        <dbReference type="ChEBI" id="CHEBI:15377"/>
        <dbReference type="ChEBI" id="CHEBI:16044"/>
        <dbReference type="ChEBI" id="CHEBI:29950"/>
        <dbReference type="ChEBI" id="CHEBI:44120"/>
        <dbReference type="ChEBI" id="CHEBI:50058"/>
        <dbReference type="EC" id="1.8.4.11"/>
    </reaction>
</comment>
<comment type="catalytic activity">
    <reaction evidence="1">
        <text>[thioredoxin]-disulfide + L-methionine + H2O = L-methionine (S)-S-oxide + [thioredoxin]-dithiol</text>
        <dbReference type="Rhea" id="RHEA:19993"/>
        <dbReference type="Rhea" id="RHEA-COMP:10698"/>
        <dbReference type="Rhea" id="RHEA-COMP:10700"/>
        <dbReference type="ChEBI" id="CHEBI:15377"/>
        <dbReference type="ChEBI" id="CHEBI:29950"/>
        <dbReference type="ChEBI" id="CHEBI:50058"/>
        <dbReference type="ChEBI" id="CHEBI:57844"/>
        <dbReference type="ChEBI" id="CHEBI:58772"/>
        <dbReference type="EC" id="1.8.4.11"/>
    </reaction>
</comment>
<comment type="similarity">
    <text evidence="1">Belongs to the MsrA Met sulfoxide reductase family.</text>
</comment>
<proteinExistence type="inferred from homology"/>
<name>MSRA_YERPG</name>
<evidence type="ECO:0000255" key="1">
    <source>
        <dbReference type="HAMAP-Rule" id="MF_01401"/>
    </source>
</evidence>
<feature type="chain" id="PRO_1000145448" description="Peptide methionine sulfoxide reductase MsrA">
    <location>
        <begin position="1"/>
        <end position="212"/>
    </location>
</feature>
<feature type="active site" evidence="1">
    <location>
        <position position="52"/>
    </location>
</feature>
<accession>A9R574</accession>
<sequence length="212" mass="23434">MQNVDNTAVIDAANALPGRLTSIPVSPLHAVHGHSMTYIPEGMDLAFFAMGCFWGAERLFWQQPGVYSTAAGYSGGHTPNPTYHEVCSGRTGHAEVVRVVFDPAVISYQQLLQIFWENHDPAQGMRQGGDVGTQYRSAIYVLTPEQEEQAHKSRERFQQAMEKAGDQRVITSEITVALPFYYAEDDHQQYLHKNPHGYCGLGGIGVCLPPNV</sequence>
<protein>
    <recommendedName>
        <fullName evidence="1">Peptide methionine sulfoxide reductase MsrA</fullName>
        <shortName evidence="1">Protein-methionine-S-oxide reductase</shortName>
        <ecNumber evidence="1">1.8.4.11</ecNumber>
    </recommendedName>
    <alternativeName>
        <fullName evidence="1">Peptide-methionine (S)-S-oxide reductase</fullName>
        <shortName evidence="1">Peptide Met(O) reductase</shortName>
    </alternativeName>
</protein>
<organism>
    <name type="scientific">Yersinia pestis bv. Antiqua (strain Angola)</name>
    <dbReference type="NCBI Taxonomy" id="349746"/>
    <lineage>
        <taxon>Bacteria</taxon>
        <taxon>Pseudomonadati</taxon>
        <taxon>Pseudomonadota</taxon>
        <taxon>Gammaproteobacteria</taxon>
        <taxon>Enterobacterales</taxon>
        <taxon>Yersiniaceae</taxon>
        <taxon>Yersinia</taxon>
    </lineage>
</organism>
<gene>
    <name evidence="1" type="primary">msrA</name>
    <name type="ordered locus">YpAngola_A3961</name>
</gene>